<protein>
    <recommendedName>
        <fullName evidence="1">GTPase Der</fullName>
    </recommendedName>
    <alternativeName>
        <fullName evidence="1">GTP-binding protein EngA</fullName>
    </alternativeName>
</protein>
<sequence>MKPVVALVGRPNVGKSTLFNRITRSRNALVDDFPGVTRDRHYVDAVWNERPFTLVDTGGFLLSDDDFFAREIRGHVELAIEDADIVALVLDGRAGISPFDRDLADILRRTSKPVFFLVNKVENHKQREELLEFYSLGIEKFYPMSAEHGIGVEPFLDDMVALFPAPEPVVEPQAGSEQGEPDASEQEICIAVAGRPNVGKSSLINRLFGKSRVVVSHVPGTTRDSVDLSIERNGRRFRLIDTAGIRRKGKVRERIEKYSILKSLKSLDQCDVALILIDADEGVTDQDITIAGYAQDRGCGALFLINKWDLLDEDRKDQRRFMEDLRTKSKFLSFAPAMTISALTGFRTHKILAMVEKIHAQYAYRINTGLLNRIVEDAIFRSEPPMHKGKRLKFFYATQVAVKPPTIVCFVNYPDAVHFSYHRYLVNQIREMAELEHTPIRLLFRAKTGKIDFSGKSKLAERIVEKKEKKTTRRKKERKEQSRRKRVRDLKG</sequence>
<reference key="1">
    <citation type="journal article" date="2009" name="Environ. Microbiol.">
        <title>Genome sequence of Desulfobacterium autotrophicum HRM2, a marine sulfate reducer oxidizing organic carbon completely to carbon dioxide.</title>
        <authorList>
            <person name="Strittmatter A.W."/>
            <person name="Liesegang H."/>
            <person name="Rabus R."/>
            <person name="Decker I."/>
            <person name="Amann J."/>
            <person name="Andres S."/>
            <person name="Henne A."/>
            <person name="Fricke W.F."/>
            <person name="Martinez-Arias R."/>
            <person name="Bartels D."/>
            <person name="Goesmann A."/>
            <person name="Krause L."/>
            <person name="Puehler A."/>
            <person name="Klenk H.P."/>
            <person name="Richter M."/>
            <person name="Schuler M."/>
            <person name="Gloeckner F.O."/>
            <person name="Meyerdierks A."/>
            <person name="Gottschalk G."/>
            <person name="Amann R."/>
        </authorList>
    </citation>
    <scope>NUCLEOTIDE SEQUENCE [LARGE SCALE GENOMIC DNA]</scope>
    <source>
        <strain>ATCC 43914 / DSM 3382 / VKM B-1955 / HRM2</strain>
    </source>
</reference>
<feature type="chain" id="PRO_1000204033" description="GTPase Der">
    <location>
        <begin position="1"/>
        <end position="492"/>
    </location>
</feature>
<feature type="domain" description="EngA-type G 1">
    <location>
        <begin position="3"/>
        <end position="167"/>
    </location>
</feature>
<feature type="domain" description="EngA-type G 2">
    <location>
        <begin position="188"/>
        <end position="363"/>
    </location>
</feature>
<feature type="domain" description="KH-like" evidence="1">
    <location>
        <begin position="364"/>
        <end position="448"/>
    </location>
</feature>
<feature type="region of interest" description="Disordered" evidence="2">
    <location>
        <begin position="464"/>
        <end position="492"/>
    </location>
</feature>
<feature type="compositionally biased region" description="Basic residues" evidence="2">
    <location>
        <begin position="469"/>
        <end position="492"/>
    </location>
</feature>
<feature type="binding site" evidence="1">
    <location>
        <begin position="9"/>
        <end position="16"/>
    </location>
    <ligand>
        <name>GTP</name>
        <dbReference type="ChEBI" id="CHEBI:37565"/>
        <label>1</label>
    </ligand>
</feature>
<feature type="binding site" evidence="1">
    <location>
        <begin position="56"/>
        <end position="60"/>
    </location>
    <ligand>
        <name>GTP</name>
        <dbReference type="ChEBI" id="CHEBI:37565"/>
        <label>1</label>
    </ligand>
</feature>
<feature type="binding site" evidence="1">
    <location>
        <begin position="119"/>
        <end position="122"/>
    </location>
    <ligand>
        <name>GTP</name>
        <dbReference type="ChEBI" id="CHEBI:37565"/>
        <label>1</label>
    </ligand>
</feature>
<feature type="binding site" evidence="1">
    <location>
        <begin position="194"/>
        <end position="201"/>
    </location>
    <ligand>
        <name>GTP</name>
        <dbReference type="ChEBI" id="CHEBI:37565"/>
        <label>2</label>
    </ligand>
</feature>
<feature type="binding site" evidence="1">
    <location>
        <begin position="241"/>
        <end position="245"/>
    </location>
    <ligand>
        <name>GTP</name>
        <dbReference type="ChEBI" id="CHEBI:37565"/>
        <label>2</label>
    </ligand>
</feature>
<feature type="binding site" evidence="1">
    <location>
        <begin position="306"/>
        <end position="309"/>
    </location>
    <ligand>
        <name>GTP</name>
        <dbReference type="ChEBI" id="CHEBI:37565"/>
        <label>2</label>
    </ligand>
</feature>
<dbReference type="EMBL" id="CP001087">
    <property type="protein sequence ID" value="ACN16723.1"/>
    <property type="molecule type" value="Genomic_DNA"/>
</dbReference>
<dbReference type="RefSeq" id="WP_015905472.1">
    <property type="nucleotide sequence ID" value="NC_012108.1"/>
</dbReference>
<dbReference type="SMR" id="C0QA05"/>
<dbReference type="STRING" id="177437.HRM2_36640"/>
<dbReference type="KEGG" id="dat:HRM2_36640"/>
<dbReference type="eggNOG" id="COG1160">
    <property type="taxonomic scope" value="Bacteria"/>
</dbReference>
<dbReference type="HOGENOM" id="CLU_016077_6_2_7"/>
<dbReference type="OrthoDB" id="9805918at2"/>
<dbReference type="Proteomes" id="UP000000442">
    <property type="component" value="Chromosome"/>
</dbReference>
<dbReference type="GO" id="GO:0005525">
    <property type="term" value="F:GTP binding"/>
    <property type="evidence" value="ECO:0007669"/>
    <property type="project" value="UniProtKB-UniRule"/>
</dbReference>
<dbReference type="GO" id="GO:0043022">
    <property type="term" value="F:ribosome binding"/>
    <property type="evidence" value="ECO:0007669"/>
    <property type="project" value="TreeGrafter"/>
</dbReference>
<dbReference type="GO" id="GO:0042254">
    <property type="term" value="P:ribosome biogenesis"/>
    <property type="evidence" value="ECO:0007669"/>
    <property type="project" value="UniProtKB-KW"/>
</dbReference>
<dbReference type="CDD" id="cd01894">
    <property type="entry name" value="EngA1"/>
    <property type="match status" value="1"/>
</dbReference>
<dbReference type="CDD" id="cd01895">
    <property type="entry name" value="EngA2"/>
    <property type="match status" value="1"/>
</dbReference>
<dbReference type="FunFam" id="3.30.300.20:FF:000004">
    <property type="entry name" value="GTPase Der"/>
    <property type="match status" value="1"/>
</dbReference>
<dbReference type="FunFam" id="3.40.50.300:FF:000040">
    <property type="entry name" value="GTPase Der"/>
    <property type="match status" value="1"/>
</dbReference>
<dbReference type="FunFam" id="3.40.50.300:FF:000057">
    <property type="entry name" value="GTPase Der"/>
    <property type="match status" value="1"/>
</dbReference>
<dbReference type="Gene3D" id="3.30.300.20">
    <property type="match status" value="1"/>
</dbReference>
<dbReference type="Gene3D" id="3.40.50.300">
    <property type="entry name" value="P-loop containing nucleotide triphosphate hydrolases"/>
    <property type="match status" value="2"/>
</dbReference>
<dbReference type="HAMAP" id="MF_00195">
    <property type="entry name" value="GTPase_Der"/>
    <property type="match status" value="1"/>
</dbReference>
<dbReference type="InterPro" id="IPR031166">
    <property type="entry name" value="G_ENGA"/>
</dbReference>
<dbReference type="InterPro" id="IPR006073">
    <property type="entry name" value="GTP-bd"/>
</dbReference>
<dbReference type="InterPro" id="IPR016484">
    <property type="entry name" value="GTPase_Der"/>
</dbReference>
<dbReference type="InterPro" id="IPR032859">
    <property type="entry name" value="KH_dom-like"/>
</dbReference>
<dbReference type="InterPro" id="IPR015946">
    <property type="entry name" value="KH_dom-like_a/b"/>
</dbReference>
<dbReference type="InterPro" id="IPR027417">
    <property type="entry name" value="P-loop_NTPase"/>
</dbReference>
<dbReference type="InterPro" id="IPR005225">
    <property type="entry name" value="Small_GTP-bd"/>
</dbReference>
<dbReference type="NCBIfam" id="TIGR03594">
    <property type="entry name" value="GTPase_EngA"/>
    <property type="match status" value="1"/>
</dbReference>
<dbReference type="NCBIfam" id="TIGR00231">
    <property type="entry name" value="small_GTP"/>
    <property type="match status" value="2"/>
</dbReference>
<dbReference type="PANTHER" id="PTHR43834">
    <property type="entry name" value="GTPASE DER"/>
    <property type="match status" value="1"/>
</dbReference>
<dbReference type="PANTHER" id="PTHR43834:SF6">
    <property type="entry name" value="GTPASE DER"/>
    <property type="match status" value="1"/>
</dbReference>
<dbReference type="Pfam" id="PF14714">
    <property type="entry name" value="KH_dom-like"/>
    <property type="match status" value="1"/>
</dbReference>
<dbReference type="Pfam" id="PF01926">
    <property type="entry name" value="MMR_HSR1"/>
    <property type="match status" value="2"/>
</dbReference>
<dbReference type="PIRSF" id="PIRSF006485">
    <property type="entry name" value="GTP-binding_EngA"/>
    <property type="match status" value="1"/>
</dbReference>
<dbReference type="SUPFAM" id="SSF52540">
    <property type="entry name" value="P-loop containing nucleoside triphosphate hydrolases"/>
    <property type="match status" value="2"/>
</dbReference>
<dbReference type="PROSITE" id="PS51712">
    <property type="entry name" value="G_ENGA"/>
    <property type="match status" value="2"/>
</dbReference>
<gene>
    <name evidence="1" type="primary">der</name>
    <name type="synonym">engA</name>
    <name type="ordered locus">HRM2_36640</name>
</gene>
<accession>C0QA05</accession>
<evidence type="ECO:0000255" key="1">
    <source>
        <dbReference type="HAMAP-Rule" id="MF_00195"/>
    </source>
</evidence>
<evidence type="ECO:0000256" key="2">
    <source>
        <dbReference type="SAM" id="MobiDB-lite"/>
    </source>
</evidence>
<name>DER_DESAH</name>
<keyword id="KW-0342">GTP-binding</keyword>
<keyword id="KW-0547">Nucleotide-binding</keyword>
<keyword id="KW-1185">Reference proteome</keyword>
<keyword id="KW-0677">Repeat</keyword>
<keyword id="KW-0690">Ribosome biogenesis</keyword>
<organism>
    <name type="scientific">Desulforapulum autotrophicum (strain ATCC 43914 / DSM 3382 / VKM B-1955 / HRM2)</name>
    <name type="common">Desulfobacterium autotrophicum</name>
    <dbReference type="NCBI Taxonomy" id="177437"/>
    <lineage>
        <taxon>Bacteria</taxon>
        <taxon>Pseudomonadati</taxon>
        <taxon>Thermodesulfobacteriota</taxon>
        <taxon>Desulfobacteria</taxon>
        <taxon>Desulfobacterales</taxon>
        <taxon>Desulfobacteraceae</taxon>
        <taxon>Desulforapulum</taxon>
    </lineage>
</organism>
<proteinExistence type="inferred from homology"/>
<comment type="function">
    <text evidence="1">GTPase that plays an essential role in the late steps of ribosome biogenesis.</text>
</comment>
<comment type="subunit">
    <text evidence="1">Associates with the 50S ribosomal subunit.</text>
</comment>
<comment type="similarity">
    <text evidence="1">Belongs to the TRAFAC class TrmE-Era-EngA-EngB-Septin-like GTPase superfamily. EngA (Der) GTPase family.</text>
</comment>